<organism>
    <name type="scientific">Pseudoferania polylepis</name>
    <name type="common">Macleay's water snake</name>
    <name type="synonym">Enhydris polylepis</name>
    <dbReference type="NCBI Taxonomy" id="338839"/>
    <lineage>
        <taxon>Eukaryota</taxon>
        <taxon>Metazoa</taxon>
        <taxon>Chordata</taxon>
        <taxon>Craniata</taxon>
        <taxon>Vertebrata</taxon>
        <taxon>Euteleostomi</taxon>
        <taxon>Lepidosauria</taxon>
        <taxon>Squamata</taxon>
        <taxon>Bifurcata</taxon>
        <taxon>Unidentata</taxon>
        <taxon>Episquamata</taxon>
        <taxon>Toxicofera</taxon>
        <taxon>Serpentes</taxon>
        <taxon>Colubroidea</taxon>
        <taxon>Homalopsidae</taxon>
        <taxon>Pseudoferania</taxon>
    </lineage>
</organism>
<name>LECM7_PSEPL</name>
<keyword id="KW-0106">Calcium</keyword>
<keyword id="KW-1015">Disulfide bond</keyword>
<keyword id="KW-0348">Hemagglutinin</keyword>
<keyword id="KW-0430">Lectin</keyword>
<keyword id="KW-0479">Metal-binding</keyword>
<keyword id="KW-0964">Secreted</keyword>
<keyword id="KW-0732">Signal</keyword>
<keyword id="KW-0800">Toxin</keyword>
<sequence>MGQFTVVSLGLLAVFLSLSGAKGDNCPANWISRNGVCNKLFPDRKTWLEAEMYCRALKPGCHLASLHRDSDSTVLAWYISDHFKGAGHVWIGLRDTNRKRTWKWSDRTSTNYFSWNQGEPNNVQDNENCVHPWAPSGYLKWNDEPCASLHPFICQYKL</sequence>
<comment type="function">
    <text evidence="1">Mannose-binding lectin which recognizes specific carbohydrate structures and agglutinates a variety of animal cells by binding to cell-surface glycoproteins and glycolipids. May be a calcium-dependent lectin (By similarity).</text>
</comment>
<comment type="subcellular location">
    <subcellularLocation>
        <location evidence="1">Secreted</location>
    </subcellularLocation>
</comment>
<comment type="tissue specificity">
    <text>Expressed by the venom gland.</text>
</comment>
<comment type="similarity">
    <text evidence="4">Belongs to the true venom lectin family.</text>
</comment>
<evidence type="ECO:0000250" key="1"/>
<evidence type="ECO:0000255" key="2"/>
<evidence type="ECO:0000255" key="3">
    <source>
        <dbReference type="PROSITE-ProRule" id="PRU00040"/>
    </source>
</evidence>
<evidence type="ECO:0000305" key="4"/>
<dbReference type="EMBL" id="EU029695">
    <property type="protein sequence ID" value="ABU68495.1"/>
    <property type="molecule type" value="mRNA"/>
</dbReference>
<dbReference type="SMR" id="A7X3Y6"/>
<dbReference type="GO" id="GO:0005576">
    <property type="term" value="C:extracellular region"/>
    <property type="evidence" value="ECO:0007669"/>
    <property type="project" value="UniProtKB-SubCell"/>
</dbReference>
<dbReference type="GO" id="GO:0030246">
    <property type="term" value="F:carbohydrate binding"/>
    <property type="evidence" value="ECO:0007669"/>
    <property type="project" value="UniProtKB-KW"/>
</dbReference>
<dbReference type="GO" id="GO:0046872">
    <property type="term" value="F:metal ion binding"/>
    <property type="evidence" value="ECO:0007669"/>
    <property type="project" value="UniProtKB-KW"/>
</dbReference>
<dbReference type="GO" id="GO:0090729">
    <property type="term" value="F:toxin activity"/>
    <property type="evidence" value="ECO:0007669"/>
    <property type="project" value="UniProtKB-KW"/>
</dbReference>
<dbReference type="FunFam" id="3.10.100.10:FF:000015">
    <property type="entry name" value="C-type lectin Cal"/>
    <property type="match status" value="1"/>
</dbReference>
<dbReference type="Gene3D" id="3.10.100.10">
    <property type="entry name" value="Mannose-Binding Protein A, subunit A"/>
    <property type="match status" value="1"/>
</dbReference>
<dbReference type="InterPro" id="IPR001304">
    <property type="entry name" value="C-type_lectin-like"/>
</dbReference>
<dbReference type="InterPro" id="IPR016186">
    <property type="entry name" value="C-type_lectin-like/link_sf"/>
</dbReference>
<dbReference type="InterPro" id="IPR050111">
    <property type="entry name" value="C-type_lectin/snaclec_domain"/>
</dbReference>
<dbReference type="InterPro" id="IPR018378">
    <property type="entry name" value="C-type_lectin_CS"/>
</dbReference>
<dbReference type="InterPro" id="IPR016187">
    <property type="entry name" value="CTDL_fold"/>
</dbReference>
<dbReference type="PANTHER" id="PTHR22803">
    <property type="entry name" value="MANNOSE, PHOSPHOLIPASE, LECTIN RECEPTOR RELATED"/>
    <property type="match status" value="1"/>
</dbReference>
<dbReference type="Pfam" id="PF00059">
    <property type="entry name" value="Lectin_C"/>
    <property type="match status" value="1"/>
</dbReference>
<dbReference type="PRINTS" id="PR01504">
    <property type="entry name" value="PNCREATITSAP"/>
</dbReference>
<dbReference type="SMART" id="SM00034">
    <property type="entry name" value="CLECT"/>
    <property type="match status" value="1"/>
</dbReference>
<dbReference type="SUPFAM" id="SSF56436">
    <property type="entry name" value="C-type lectin-like"/>
    <property type="match status" value="1"/>
</dbReference>
<dbReference type="PROSITE" id="PS00615">
    <property type="entry name" value="C_TYPE_LECTIN_1"/>
    <property type="match status" value="1"/>
</dbReference>
<dbReference type="PROSITE" id="PS50041">
    <property type="entry name" value="C_TYPE_LECTIN_2"/>
    <property type="match status" value="1"/>
</dbReference>
<accession>A7X3Y6</accession>
<reference key="1">
    <citation type="journal article" date="2008" name="Mol. Cell. Proteomics">
        <title>Evolution of an arsenal: structural and functional diversification of the venom system in the advanced snakes (Caenophidia).</title>
        <authorList>
            <person name="Fry B.G."/>
            <person name="Scheib H."/>
            <person name="van der Weerd L."/>
            <person name="Young B."/>
            <person name="McNaughtan J."/>
            <person name="Ramjan S.F.R."/>
            <person name="Vidal N."/>
            <person name="Poelmann R.E."/>
            <person name="Norman J.A."/>
        </authorList>
    </citation>
    <scope>NUCLEOTIDE SEQUENCE [MRNA]</scope>
    <source>
        <tissue>Venom gland</tissue>
    </source>
</reference>
<feature type="signal peptide" evidence="2">
    <location>
        <begin position="1"/>
        <end position="23"/>
    </location>
</feature>
<feature type="chain" id="PRO_0000356313" description="C-type lectin lectoxin-Enh7">
    <location>
        <begin position="24"/>
        <end position="158"/>
    </location>
</feature>
<feature type="domain" description="C-type lectin" evidence="3">
    <location>
        <begin position="33"/>
        <end position="155"/>
    </location>
</feature>
<feature type="short sequence motif" description="Mannose-binding">
    <location>
        <begin position="119"/>
        <end position="121"/>
    </location>
</feature>
<feature type="binding site" evidence="1">
    <location>
        <position position="127"/>
    </location>
    <ligand>
        <name>Ca(2+)</name>
        <dbReference type="ChEBI" id="CHEBI:29108"/>
    </ligand>
</feature>
<feature type="binding site" evidence="1">
    <location>
        <position position="142"/>
    </location>
    <ligand>
        <name>Ca(2+)</name>
        <dbReference type="ChEBI" id="CHEBI:29108"/>
    </ligand>
</feature>
<feature type="binding site" evidence="1">
    <location>
        <position position="143"/>
    </location>
    <ligand>
        <name>Ca(2+)</name>
        <dbReference type="ChEBI" id="CHEBI:29108"/>
    </ligand>
</feature>
<feature type="disulfide bond" evidence="3">
    <location>
        <begin position="26"/>
        <end position="37"/>
    </location>
</feature>
<feature type="disulfide bond" evidence="3">
    <location>
        <begin position="54"/>
        <end position="154"/>
    </location>
</feature>
<feature type="disulfide bond" evidence="3">
    <location>
        <begin position="129"/>
        <end position="146"/>
    </location>
</feature>
<proteinExistence type="evidence at transcript level"/>
<protein>
    <recommendedName>
        <fullName>C-type lectin lectoxin-Enh7</fullName>
        <shortName>CTL</shortName>
    </recommendedName>
</protein>